<proteinExistence type="inferred from homology"/>
<reference key="1">
    <citation type="journal article" date="2002" name="Nucleic Acids Res.">
        <title>Genome sequence of Shigella flexneri 2a: insights into pathogenicity through comparison with genomes of Escherichia coli K12 and O157.</title>
        <authorList>
            <person name="Jin Q."/>
            <person name="Yuan Z."/>
            <person name="Xu J."/>
            <person name="Wang Y."/>
            <person name="Shen Y."/>
            <person name="Lu W."/>
            <person name="Wang J."/>
            <person name="Liu H."/>
            <person name="Yang J."/>
            <person name="Yang F."/>
            <person name="Zhang X."/>
            <person name="Zhang J."/>
            <person name="Yang G."/>
            <person name="Wu H."/>
            <person name="Qu D."/>
            <person name="Dong J."/>
            <person name="Sun L."/>
            <person name="Xue Y."/>
            <person name="Zhao A."/>
            <person name="Gao Y."/>
            <person name="Zhu J."/>
            <person name="Kan B."/>
            <person name="Ding K."/>
            <person name="Chen S."/>
            <person name="Cheng H."/>
            <person name="Yao Z."/>
            <person name="He B."/>
            <person name="Chen R."/>
            <person name="Ma D."/>
            <person name="Qiang B."/>
            <person name="Wen Y."/>
            <person name="Hou Y."/>
            <person name="Yu J."/>
        </authorList>
    </citation>
    <scope>NUCLEOTIDE SEQUENCE [LARGE SCALE GENOMIC DNA]</scope>
    <source>
        <strain>301 / Serotype 2a</strain>
    </source>
</reference>
<reference key="2">
    <citation type="journal article" date="2003" name="Infect. Immun.">
        <title>Complete genome sequence and comparative genomics of Shigella flexneri serotype 2a strain 2457T.</title>
        <authorList>
            <person name="Wei J."/>
            <person name="Goldberg M.B."/>
            <person name="Burland V."/>
            <person name="Venkatesan M.M."/>
            <person name="Deng W."/>
            <person name="Fournier G."/>
            <person name="Mayhew G.F."/>
            <person name="Plunkett G. III"/>
            <person name="Rose D.J."/>
            <person name="Darling A."/>
            <person name="Mau B."/>
            <person name="Perna N.T."/>
            <person name="Payne S.M."/>
            <person name="Runyen-Janecky L.J."/>
            <person name="Zhou S."/>
            <person name="Schwartz D.C."/>
            <person name="Blattner F.R."/>
        </authorList>
    </citation>
    <scope>NUCLEOTIDE SEQUENCE [LARGE SCALE GENOMIC DNA]</scope>
    <source>
        <strain>ATCC 700930 / 2457T / Serotype 2a</strain>
    </source>
</reference>
<evidence type="ECO:0000250" key="1">
    <source>
        <dbReference type="UniProtKB" id="P0ACU0"/>
    </source>
</evidence>
<evidence type="ECO:0000255" key="2">
    <source>
        <dbReference type="PROSITE-ProRule" id="PRU00335"/>
    </source>
</evidence>
<evidence type="ECO:0000305" key="3"/>
<keyword id="KW-0010">Activator</keyword>
<keyword id="KW-0963">Cytoplasm</keyword>
<keyword id="KW-0238">DNA-binding</keyword>
<keyword id="KW-1185">Reference proteome</keyword>
<keyword id="KW-0678">Repressor</keyword>
<keyword id="KW-0804">Transcription</keyword>
<keyword id="KW-0805">Transcription regulation</keyword>
<gene>
    <name evidence="1" type="primary">cecR</name>
    <name type="synonym">ybiH</name>
    <name type="ordered locus">SF0746</name>
    <name type="ordered locus">S0787</name>
</gene>
<feature type="chain" id="PRO_0000070633" description="HTH-type transcriptional dual regulator CecR">
    <location>
        <begin position="1"/>
        <end position="223"/>
    </location>
</feature>
<feature type="domain" description="HTH tetR-type" evidence="2">
    <location>
        <begin position="11"/>
        <end position="70"/>
    </location>
</feature>
<feature type="DNA-binding region" description="H-T-H motif" evidence="2">
    <location>
        <begin position="33"/>
        <end position="52"/>
    </location>
</feature>
<organism>
    <name type="scientific">Shigella flexneri</name>
    <dbReference type="NCBI Taxonomy" id="623"/>
    <lineage>
        <taxon>Bacteria</taxon>
        <taxon>Pseudomonadati</taxon>
        <taxon>Pseudomonadota</taxon>
        <taxon>Gammaproteobacteria</taxon>
        <taxon>Enterobacterales</taxon>
        <taxon>Enterobacteriaceae</taxon>
        <taxon>Shigella</taxon>
    </lineage>
</organism>
<comment type="function">
    <text evidence="1">Regulates transcription of the cecR-ybhGFSR operon and the rhlE gene, which altogether are involved in the control of sensitivity to cefoperazone and chloramphenicol. Represses the cecR-ybhGFSR operon and activates the rhlE operon. Acts by binding to a palindromic sequence within the intergenic spacer located between these two divergently transcribed operons.</text>
</comment>
<comment type="subcellular location">
    <subcellularLocation>
        <location evidence="1">Cytoplasm</location>
    </subcellularLocation>
</comment>
<comment type="sequence caution" evidence="3">
    <conflict type="erroneous initiation">
        <sequence resource="EMBL-CDS" id="AAN42381"/>
    </conflict>
</comment>
<comment type="sequence caution" evidence="3">
    <conflict type="erroneous initiation">
        <sequence resource="EMBL-CDS" id="AAP16258"/>
    </conflict>
</comment>
<name>CECR_SHIFL</name>
<sequence>MNNPAMTIKGEQAKKQLIAAALAQFGEYGMNATTREIAAQAGQNIAAITYYFGSKEDLYLACAQWIADFIGEQFRPHAEEAERLFAQPQPDRAAIRELILRACRNMIKLLTQDDTVNLSKFISREQLSPTAAYHLVHEQVISPLHSHLTRLIAAWTGCDANDTRMILHTHALIGEILAFRLGKETILLRTGWTAFDEEKTELINQTVTCHIDLILQGLSQRSL</sequence>
<dbReference type="EMBL" id="AE005674">
    <property type="protein sequence ID" value="AAN42381.1"/>
    <property type="status" value="ALT_INIT"/>
    <property type="molecule type" value="Genomic_DNA"/>
</dbReference>
<dbReference type="EMBL" id="AE014073">
    <property type="protein sequence ID" value="AAP16258.1"/>
    <property type="status" value="ALT_INIT"/>
    <property type="molecule type" value="Genomic_DNA"/>
</dbReference>
<dbReference type="RefSeq" id="NP_706674.1">
    <property type="nucleotide sequence ID" value="NC_004337.2"/>
</dbReference>
<dbReference type="RefSeq" id="WP_001296991.1">
    <property type="nucleotide sequence ID" value="NZ_WPGW01000030.1"/>
</dbReference>
<dbReference type="SMR" id="P0ACU1"/>
<dbReference type="STRING" id="198214.SF0746"/>
<dbReference type="PaxDb" id="198214-SF0746"/>
<dbReference type="GeneID" id="1026146"/>
<dbReference type="GeneID" id="75204911"/>
<dbReference type="KEGG" id="sfl:SF0746"/>
<dbReference type="KEGG" id="sfx:S0787"/>
<dbReference type="PATRIC" id="fig|198214.7.peg.867"/>
<dbReference type="HOGENOM" id="CLU_069356_16_0_6"/>
<dbReference type="Proteomes" id="UP000001006">
    <property type="component" value="Chromosome"/>
</dbReference>
<dbReference type="Proteomes" id="UP000002673">
    <property type="component" value="Chromosome"/>
</dbReference>
<dbReference type="GO" id="GO:0005737">
    <property type="term" value="C:cytoplasm"/>
    <property type="evidence" value="ECO:0007669"/>
    <property type="project" value="UniProtKB-SubCell"/>
</dbReference>
<dbReference type="GO" id="GO:0003700">
    <property type="term" value="F:DNA-binding transcription factor activity"/>
    <property type="evidence" value="ECO:0007669"/>
    <property type="project" value="TreeGrafter"/>
</dbReference>
<dbReference type="GO" id="GO:0000976">
    <property type="term" value="F:transcription cis-regulatory region binding"/>
    <property type="evidence" value="ECO:0007669"/>
    <property type="project" value="TreeGrafter"/>
</dbReference>
<dbReference type="FunFam" id="1.10.357.10:FF:000008">
    <property type="entry name" value="Transcriptional regulator, TetR family"/>
    <property type="match status" value="1"/>
</dbReference>
<dbReference type="Gene3D" id="1.10.10.60">
    <property type="entry name" value="Homeodomain-like"/>
    <property type="match status" value="1"/>
</dbReference>
<dbReference type="Gene3D" id="1.10.357.10">
    <property type="entry name" value="Tetracycline Repressor, domain 2"/>
    <property type="match status" value="1"/>
</dbReference>
<dbReference type="InterPro" id="IPR023772">
    <property type="entry name" value="DNA-bd_HTH_TetR-type_CS"/>
</dbReference>
<dbReference type="InterPro" id="IPR009057">
    <property type="entry name" value="Homeodomain-like_sf"/>
</dbReference>
<dbReference type="InterPro" id="IPR050109">
    <property type="entry name" value="HTH-type_TetR-like_transc_reg"/>
</dbReference>
<dbReference type="InterPro" id="IPR001647">
    <property type="entry name" value="HTH_TetR"/>
</dbReference>
<dbReference type="InterPro" id="IPR036271">
    <property type="entry name" value="Tet_transcr_reg_TetR-rel_C_sf"/>
</dbReference>
<dbReference type="InterPro" id="IPR015292">
    <property type="entry name" value="Tscrpt_reg_YbiH_C"/>
</dbReference>
<dbReference type="NCBIfam" id="NF008587">
    <property type="entry name" value="PRK11552.1"/>
    <property type="match status" value="1"/>
</dbReference>
<dbReference type="PANTHER" id="PTHR30055:SF146">
    <property type="entry name" value="HTH-TYPE TRANSCRIPTIONAL DUAL REGULATOR CECR"/>
    <property type="match status" value="1"/>
</dbReference>
<dbReference type="PANTHER" id="PTHR30055">
    <property type="entry name" value="HTH-TYPE TRANSCRIPTIONAL REGULATOR RUTR"/>
    <property type="match status" value="1"/>
</dbReference>
<dbReference type="Pfam" id="PF09209">
    <property type="entry name" value="CecR_C"/>
    <property type="match status" value="1"/>
</dbReference>
<dbReference type="Pfam" id="PF00440">
    <property type="entry name" value="TetR_N"/>
    <property type="match status" value="1"/>
</dbReference>
<dbReference type="PRINTS" id="PR00455">
    <property type="entry name" value="HTHTETR"/>
</dbReference>
<dbReference type="SUPFAM" id="SSF46689">
    <property type="entry name" value="Homeodomain-like"/>
    <property type="match status" value="1"/>
</dbReference>
<dbReference type="SUPFAM" id="SSF48498">
    <property type="entry name" value="Tetracyclin repressor-like, C-terminal domain"/>
    <property type="match status" value="1"/>
</dbReference>
<dbReference type="PROSITE" id="PS01081">
    <property type="entry name" value="HTH_TETR_1"/>
    <property type="match status" value="1"/>
</dbReference>
<dbReference type="PROSITE" id="PS50977">
    <property type="entry name" value="HTH_TETR_2"/>
    <property type="match status" value="1"/>
</dbReference>
<protein>
    <recommendedName>
        <fullName evidence="1">HTH-type transcriptional dual regulator CecR</fullName>
    </recommendedName>
</protein>
<accession>P0ACU1</accession>
<accession>P41037</accession>
<accession>P78054</accession>